<dbReference type="EMBL" id="CP000151">
    <property type="protein sequence ID" value="ABB09727.1"/>
    <property type="molecule type" value="Genomic_DNA"/>
</dbReference>
<dbReference type="RefSeq" id="WP_011353236.1">
    <property type="nucleotide sequence ID" value="NZ_WNDV01000010.1"/>
</dbReference>
<dbReference type="SMR" id="Q39CT9"/>
<dbReference type="GeneID" id="45096015"/>
<dbReference type="KEGG" id="bur:Bcep18194_A6133"/>
<dbReference type="PATRIC" id="fig|482957.22.peg.3138"/>
<dbReference type="HOGENOM" id="CLU_075939_0_1_4"/>
<dbReference type="Proteomes" id="UP000002705">
    <property type="component" value="Chromosome 1"/>
</dbReference>
<dbReference type="GO" id="GO:0022625">
    <property type="term" value="C:cytosolic large ribosomal subunit"/>
    <property type="evidence" value="ECO:0007669"/>
    <property type="project" value="TreeGrafter"/>
</dbReference>
<dbReference type="GO" id="GO:0008097">
    <property type="term" value="F:5S rRNA binding"/>
    <property type="evidence" value="ECO:0007669"/>
    <property type="project" value="InterPro"/>
</dbReference>
<dbReference type="GO" id="GO:0003735">
    <property type="term" value="F:structural constituent of ribosome"/>
    <property type="evidence" value="ECO:0007669"/>
    <property type="project" value="InterPro"/>
</dbReference>
<dbReference type="GO" id="GO:0006412">
    <property type="term" value="P:translation"/>
    <property type="evidence" value="ECO:0007669"/>
    <property type="project" value="UniProtKB-UniRule"/>
</dbReference>
<dbReference type="CDD" id="cd00495">
    <property type="entry name" value="Ribosomal_L25_TL5_CTC"/>
    <property type="match status" value="1"/>
</dbReference>
<dbReference type="Gene3D" id="2.170.120.20">
    <property type="entry name" value="Ribosomal protein L25, beta domain"/>
    <property type="match status" value="1"/>
</dbReference>
<dbReference type="Gene3D" id="2.40.240.10">
    <property type="entry name" value="Ribosomal Protein L25, Chain P"/>
    <property type="match status" value="1"/>
</dbReference>
<dbReference type="HAMAP" id="MF_01336">
    <property type="entry name" value="Ribosomal_bL25"/>
    <property type="match status" value="1"/>
</dbReference>
<dbReference type="HAMAP" id="MF_01334">
    <property type="entry name" value="Ribosomal_bL25_CTC"/>
    <property type="match status" value="1"/>
</dbReference>
<dbReference type="InterPro" id="IPR020056">
    <property type="entry name" value="Rbsml_bL25/Gln-tRNA_synth_N"/>
</dbReference>
<dbReference type="InterPro" id="IPR011035">
    <property type="entry name" value="Ribosomal_bL25/Gln-tRNA_synth"/>
</dbReference>
<dbReference type="InterPro" id="IPR020057">
    <property type="entry name" value="Ribosomal_bL25_b-dom"/>
</dbReference>
<dbReference type="InterPro" id="IPR037121">
    <property type="entry name" value="Ribosomal_bL25_C"/>
</dbReference>
<dbReference type="InterPro" id="IPR001021">
    <property type="entry name" value="Ribosomal_bL25_long"/>
</dbReference>
<dbReference type="InterPro" id="IPR020055">
    <property type="entry name" value="Ribosomal_bL25_short"/>
</dbReference>
<dbReference type="InterPro" id="IPR029751">
    <property type="entry name" value="Ribosomal_L25_dom"/>
</dbReference>
<dbReference type="InterPro" id="IPR020930">
    <property type="entry name" value="Ribosomal_uL5_bac-type"/>
</dbReference>
<dbReference type="NCBIfam" id="TIGR00731">
    <property type="entry name" value="bL25_bact_ctc"/>
    <property type="match status" value="1"/>
</dbReference>
<dbReference type="NCBIfam" id="NF004128">
    <property type="entry name" value="PRK05618.1-2"/>
    <property type="match status" value="1"/>
</dbReference>
<dbReference type="NCBIfam" id="NF004130">
    <property type="entry name" value="PRK05618.1-5"/>
    <property type="match status" value="1"/>
</dbReference>
<dbReference type="NCBIfam" id="NF004612">
    <property type="entry name" value="PRK05943.1"/>
    <property type="match status" value="1"/>
</dbReference>
<dbReference type="PANTHER" id="PTHR33284">
    <property type="entry name" value="RIBOSOMAL PROTEIN L25/GLN-TRNA SYNTHETASE, ANTI-CODON-BINDING DOMAIN-CONTAINING PROTEIN"/>
    <property type="match status" value="1"/>
</dbReference>
<dbReference type="PANTHER" id="PTHR33284:SF1">
    <property type="entry name" value="RIBOSOMAL PROTEIN L25_GLN-TRNA SYNTHETASE, ANTI-CODON-BINDING DOMAIN-CONTAINING PROTEIN"/>
    <property type="match status" value="1"/>
</dbReference>
<dbReference type="Pfam" id="PF01386">
    <property type="entry name" value="Ribosomal_L25p"/>
    <property type="match status" value="1"/>
</dbReference>
<dbReference type="Pfam" id="PF14693">
    <property type="entry name" value="Ribosomal_TL5_C"/>
    <property type="match status" value="1"/>
</dbReference>
<dbReference type="SUPFAM" id="SSF50715">
    <property type="entry name" value="Ribosomal protein L25-like"/>
    <property type="match status" value="1"/>
</dbReference>
<gene>
    <name evidence="1" type="primary">rplY</name>
    <name evidence="1" type="synonym">ctc</name>
    <name type="ordered locus">Bcep18194_A6133</name>
</gene>
<accession>Q39CT9</accession>
<feature type="chain" id="PRO_0000244196" description="Large ribosomal subunit protein bL25">
    <location>
        <begin position="1"/>
        <end position="201"/>
    </location>
</feature>
<proteinExistence type="inferred from homology"/>
<name>RL25_BURL3</name>
<comment type="function">
    <text evidence="1">This is one of the proteins that binds to the 5S RNA in the ribosome where it forms part of the central protuberance.</text>
</comment>
<comment type="subunit">
    <text evidence="1">Part of the 50S ribosomal subunit; part of the 5S rRNA/L5/L18/L25 subcomplex. Contacts the 5S rRNA. Binds to the 5S rRNA independently of L5 and L18.</text>
</comment>
<comment type="similarity">
    <text evidence="1">Belongs to the bacterial ribosomal protein bL25 family. CTC subfamily.</text>
</comment>
<sequence length="201" mass="21625">MKVVAFERQEQGTGASRRLRNAGKTTGIVYGGEAAPQKIELDHNALWHALKKEAFHSSILDLEVAGQSQQVLLRDVQYHPFKQLVLHVDFQRVDAKKKLHTKAPLHFLNAEISPAVKLSSAIVSHVATEIEIECLPADLPEFLEVDLSKIEAGQSLHAKDITLPKGVVLVAHVDAENPVVASATVPAGAVSDAAEGETPAA</sequence>
<keyword id="KW-0687">Ribonucleoprotein</keyword>
<keyword id="KW-0689">Ribosomal protein</keyword>
<keyword id="KW-0694">RNA-binding</keyword>
<keyword id="KW-0699">rRNA-binding</keyword>
<evidence type="ECO:0000255" key="1">
    <source>
        <dbReference type="HAMAP-Rule" id="MF_01334"/>
    </source>
</evidence>
<evidence type="ECO:0000305" key="2"/>
<protein>
    <recommendedName>
        <fullName evidence="1">Large ribosomal subunit protein bL25</fullName>
    </recommendedName>
    <alternativeName>
        <fullName evidence="2">50S ribosomal protein L25</fullName>
    </alternativeName>
    <alternativeName>
        <fullName evidence="1">General stress protein CTC</fullName>
    </alternativeName>
</protein>
<reference key="1">
    <citation type="submission" date="2005-10" db="EMBL/GenBank/DDBJ databases">
        <title>Complete sequence of chromosome 1 of Burkholderia sp. 383.</title>
        <authorList>
            <consortium name="US DOE Joint Genome Institute"/>
            <person name="Copeland A."/>
            <person name="Lucas S."/>
            <person name="Lapidus A."/>
            <person name="Barry K."/>
            <person name="Detter J.C."/>
            <person name="Glavina T."/>
            <person name="Hammon N."/>
            <person name="Israni S."/>
            <person name="Pitluck S."/>
            <person name="Chain P."/>
            <person name="Malfatti S."/>
            <person name="Shin M."/>
            <person name="Vergez L."/>
            <person name="Schmutz J."/>
            <person name="Larimer F."/>
            <person name="Land M."/>
            <person name="Kyrpides N."/>
            <person name="Lykidis A."/>
            <person name="Richardson P."/>
        </authorList>
    </citation>
    <scope>NUCLEOTIDE SEQUENCE [LARGE SCALE GENOMIC DNA]</scope>
    <source>
        <strain>ATCC 17760 / DSM 23089 / LMG 22485 / NCIMB 9086 / R18194 / 383</strain>
    </source>
</reference>
<organism>
    <name type="scientific">Burkholderia lata (strain ATCC 17760 / DSM 23089 / LMG 22485 / NCIMB 9086 / R18194 / 383)</name>
    <dbReference type="NCBI Taxonomy" id="482957"/>
    <lineage>
        <taxon>Bacteria</taxon>
        <taxon>Pseudomonadati</taxon>
        <taxon>Pseudomonadota</taxon>
        <taxon>Betaproteobacteria</taxon>
        <taxon>Burkholderiales</taxon>
        <taxon>Burkholderiaceae</taxon>
        <taxon>Burkholderia</taxon>
        <taxon>Burkholderia cepacia complex</taxon>
    </lineage>
</organism>